<reference key="1">
    <citation type="journal article" date="2009" name="Appl. Environ. Microbiol.">
        <title>Three genomes from the phylum Acidobacteria provide insight into the lifestyles of these microorganisms in soils.</title>
        <authorList>
            <person name="Ward N.L."/>
            <person name="Challacombe J.F."/>
            <person name="Janssen P.H."/>
            <person name="Henrissat B."/>
            <person name="Coutinho P.M."/>
            <person name="Wu M."/>
            <person name="Xie G."/>
            <person name="Haft D.H."/>
            <person name="Sait M."/>
            <person name="Badger J."/>
            <person name="Barabote R.D."/>
            <person name="Bradley B."/>
            <person name="Brettin T.S."/>
            <person name="Brinkac L.M."/>
            <person name="Bruce D."/>
            <person name="Creasy T."/>
            <person name="Daugherty S.C."/>
            <person name="Davidsen T.M."/>
            <person name="DeBoy R.T."/>
            <person name="Detter J.C."/>
            <person name="Dodson R.J."/>
            <person name="Durkin A.S."/>
            <person name="Ganapathy A."/>
            <person name="Gwinn-Giglio M."/>
            <person name="Han C.S."/>
            <person name="Khouri H."/>
            <person name="Kiss H."/>
            <person name="Kothari S.P."/>
            <person name="Madupu R."/>
            <person name="Nelson K.E."/>
            <person name="Nelson W.C."/>
            <person name="Paulsen I."/>
            <person name="Penn K."/>
            <person name="Ren Q."/>
            <person name="Rosovitz M.J."/>
            <person name="Selengut J.D."/>
            <person name="Shrivastava S."/>
            <person name="Sullivan S.A."/>
            <person name="Tapia R."/>
            <person name="Thompson L.S."/>
            <person name="Watkins K.L."/>
            <person name="Yang Q."/>
            <person name="Yu C."/>
            <person name="Zafar N."/>
            <person name="Zhou L."/>
            <person name="Kuske C.R."/>
        </authorList>
    </citation>
    <scope>NUCLEOTIDE SEQUENCE [LARGE SCALE GENOMIC DNA]</scope>
    <source>
        <strain>Ellin345</strain>
    </source>
</reference>
<proteinExistence type="inferred from homology"/>
<dbReference type="EMBL" id="CP000360">
    <property type="protein sequence ID" value="ABF39151.1"/>
    <property type="molecule type" value="Genomic_DNA"/>
</dbReference>
<dbReference type="RefSeq" id="WP_011520953.1">
    <property type="nucleotide sequence ID" value="NC_008009.1"/>
</dbReference>
<dbReference type="SMR" id="Q1IVE9"/>
<dbReference type="STRING" id="204669.Acid345_0146"/>
<dbReference type="EnsemblBacteria" id="ABF39151">
    <property type="protein sequence ID" value="ABF39151"/>
    <property type="gene ID" value="Acid345_0146"/>
</dbReference>
<dbReference type="KEGG" id="aba:Acid345_0146"/>
<dbReference type="eggNOG" id="COG0342">
    <property type="taxonomic scope" value="Bacteria"/>
</dbReference>
<dbReference type="HOGENOM" id="CLU_007894_4_3_0"/>
<dbReference type="OrthoDB" id="9805019at2"/>
<dbReference type="Proteomes" id="UP000002432">
    <property type="component" value="Chromosome"/>
</dbReference>
<dbReference type="GO" id="GO:0005886">
    <property type="term" value="C:plasma membrane"/>
    <property type="evidence" value="ECO:0007669"/>
    <property type="project" value="UniProtKB-SubCell"/>
</dbReference>
<dbReference type="GO" id="GO:0015450">
    <property type="term" value="F:protein-transporting ATPase activity"/>
    <property type="evidence" value="ECO:0007669"/>
    <property type="project" value="InterPro"/>
</dbReference>
<dbReference type="GO" id="GO:0065002">
    <property type="term" value="P:intracellular protein transmembrane transport"/>
    <property type="evidence" value="ECO:0007669"/>
    <property type="project" value="UniProtKB-UniRule"/>
</dbReference>
<dbReference type="GO" id="GO:0006605">
    <property type="term" value="P:protein targeting"/>
    <property type="evidence" value="ECO:0007669"/>
    <property type="project" value="UniProtKB-UniRule"/>
</dbReference>
<dbReference type="GO" id="GO:0043952">
    <property type="term" value="P:protein transport by the Sec complex"/>
    <property type="evidence" value="ECO:0007669"/>
    <property type="project" value="UniProtKB-UniRule"/>
</dbReference>
<dbReference type="FunFam" id="1.20.1640.10:FF:000004">
    <property type="entry name" value="Protein translocase subunit SecD"/>
    <property type="match status" value="1"/>
</dbReference>
<dbReference type="Gene3D" id="3.30.1360.200">
    <property type="match status" value="1"/>
</dbReference>
<dbReference type="Gene3D" id="3.30.70.3400">
    <property type="match status" value="2"/>
</dbReference>
<dbReference type="Gene3D" id="1.20.1640.10">
    <property type="entry name" value="Multidrug efflux transporter AcrB transmembrane domain"/>
    <property type="match status" value="1"/>
</dbReference>
<dbReference type="HAMAP" id="MF_01463_B">
    <property type="entry name" value="SecD_B"/>
    <property type="match status" value="1"/>
</dbReference>
<dbReference type="InterPro" id="IPR001036">
    <property type="entry name" value="Acrflvin-R"/>
</dbReference>
<dbReference type="InterPro" id="IPR005791">
    <property type="entry name" value="SecD"/>
</dbReference>
<dbReference type="InterPro" id="IPR022813">
    <property type="entry name" value="SecD/SecF_arch_bac"/>
</dbReference>
<dbReference type="InterPro" id="IPR022646">
    <property type="entry name" value="SecD/SecF_CS"/>
</dbReference>
<dbReference type="InterPro" id="IPR048631">
    <property type="entry name" value="SecD_1st"/>
</dbReference>
<dbReference type="InterPro" id="IPR048634">
    <property type="entry name" value="SecD_SecF_C"/>
</dbReference>
<dbReference type="InterPro" id="IPR055344">
    <property type="entry name" value="SecD_SecF_C_bact"/>
</dbReference>
<dbReference type="InterPro" id="IPR054384">
    <property type="entry name" value="SecDF_P1_head"/>
</dbReference>
<dbReference type="NCBIfam" id="TIGR00916">
    <property type="entry name" value="2A0604s01"/>
    <property type="match status" value="1"/>
</dbReference>
<dbReference type="NCBIfam" id="TIGR01129">
    <property type="entry name" value="secD"/>
    <property type="match status" value="1"/>
</dbReference>
<dbReference type="PANTHER" id="PTHR30081:SF1">
    <property type="entry name" value="PROTEIN TRANSLOCASE SUBUNIT SECD"/>
    <property type="match status" value="1"/>
</dbReference>
<dbReference type="PANTHER" id="PTHR30081">
    <property type="entry name" value="PROTEIN-EXPORT MEMBRANE PROTEIN SEC"/>
    <property type="match status" value="1"/>
</dbReference>
<dbReference type="Pfam" id="PF07549">
    <property type="entry name" value="Sec_GG"/>
    <property type="match status" value="1"/>
</dbReference>
<dbReference type="Pfam" id="PF21760">
    <property type="entry name" value="SecD_1st"/>
    <property type="match status" value="1"/>
</dbReference>
<dbReference type="Pfam" id="PF02355">
    <property type="entry name" value="SecD_SecF_C"/>
    <property type="match status" value="1"/>
</dbReference>
<dbReference type="Pfam" id="PF22599">
    <property type="entry name" value="SecDF_P1_head"/>
    <property type="match status" value="1"/>
</dbReference>
<dbReference type="PRINTS" id="PR00702">
    <property type="entry name" value="ACRIFLAVINRP"/>
</dbReference>
<dbReference type="SUPFAM" id="SSF82866">
    <property type="entry name" value="Multidrug efflux transporter AcrB transmembrane domain"/>
    <property type="match status" value="1"/>
</dbReference>
<accession>Q1IVE9</accession>
<comment type="function">
    <text evidence="1">Part of the Sec protein translocase complex. Interacts with the SecYEG preprotein conducting channel. SecDF uses the proton motive force (PMF) to complete protein translocation after the ATP-dependent function of SecA.</text>
</comment>
<comment type="subunit">
    <text evidence="1">Forms a complex with SecF. Part of the essential Sec protein translocation apparatus which comprises SecA, SecYEG and auxiliary proteins SecDF. Other proteins may also be involved.</text>
</comment>
<comment type="subcellular location">
    <subcellularLocation>
        <location evidence="1">Cell inner membrane</location>
        <topology evidence="1">Multi-pass membrane protein</topology>
    </subcellularLocation>
</comment>
<comment type="similarity">
    <text evidence="1">Belongs to the SecD/SecF family. SecD subfamily.</text>
</comment>
<evidence type="ECO:0000255" key="1">
    <source>
        <dbReference type="HAMAP-Rule" id="MF_01463"/>
    </source>
</evidence>
<name>SECD_KORVE</name>
<protein>
    <recommendedName>
        <fullName evidence="1">Protein translocase subunit SecD</fullName>
    </recommendedName>
</protein>
<keyword id="KW-0997">Cell inner membrane</keyword>
<keyword id="KW-1003">Cell membrane</keyword>
<keyword id="KW-0472">Membrane</keyword>
<keyword id="KW-0653">Protein transport</keyword>
<keyword id="KW-1185">Reference proteome</keyword>
<keyword id="KW-0811">Translocation</keyword>
<keyword id="KW-0812">Transmembrane</keyword>
<keyword id="KW-1133">Transmembrane helix</keyword>
<keyword id="KW-0813">Transport</keyword>
<feature type="chain" id="PRO_5000120802" description="Protein translocase subunit SecD">
    <location>
        <begin position="1"/>
        <end position="535"/>
    </location>
</feature>
<feature type="transmembrane region" description="Helical" evidence="1">
    <location>
        <begin position="5"/>
        <end position="25"/>
    </location>
</feature>
<feature type="transmembrane region" description="Helical" evidence="1">
    <location>
        <begin position="377"/>
        <end position="397"/>
    </location>
</feature>
<feature type="transmembrane region" description="Helical" evidence="1">
    <location>
        <begin position="402"/>
        <end position="421"/>
    </location>
</feature>
<feature type="transmembrane region" description="Helical" evidence="1">
    <location>
        <begin position="425"/>
        <end position="444"/>
    </location>
</feature>
<feature type="transmembrane region" description="Helical" evidence="1">
    <location>
        <begin position="469"/>
        <end position="489"/>
    </location>
</feature>
<feature type="transmembrane region" description="Helical" evidence="1">
    <location>
        <begin position="496"/>
        <end position="516"/>
    </location>
</feature>
<sequence>MKKNLTWKVVVIVAVLLVFAFGIIGNPAEVKWDKEGLKTALMNRIHLGLDLRGGTHLILQVVVNDAVNAETDRAIERIKEDLANNKVTYSDITKPDAANAPERIAIKGITPDGATTLRRVSDERLPEYSFGSGPEGSYTLTMKPAQLKDLKDRAVQQAIQKIRERVDSLGVSEPVIQEHGLGDYQILVQLPGVDDPARVKEVMQSTAMLEIRQVFGGPYSKESEAAQGQMQQPDTVVLPGKSESDPGTQVFYLVARSSAVAGHDLRQARVGRDQNGGANVQFNLTRDGGVRFSQFTSAHVGDKLGVILDGKVMEVANIKSEISDSGEIEGRFTDQQASDLALILNSGALPASIKYLEERTVGPSLGMDSIRQGVRAAIIGFVAVIIFMLIYYKGAGINADLSLLLNLVILLGFMGYFGAVLTLPGIAGVILTVGMGVDSNVLIFERIREELRNGKTPPSAVEQGFGHAWLTIIDTHVTTIVSAIILFLFGTGPVKGFAVTLSFGLFANLFTAVFVSRVIFDSILNRHQRGEALSI</sequence>
<gene>
    <name evidence="1" type="primary">secD</name>
    <name type="ordered locus">Acid345_0146</name>
</gene>
<organism>
    <name type="scientific">Koribacter versatilis (strain Ellin345)</name>
    <dbReference type="NCBI Taxonomy" id="204669"/>
    <lineage>
        <taxon>Bacteria</taxon>
        <taxon>Pseudomonadati</taxon>
        <taxon>Acidobacteriota</taxon>
        <taxon>Terriglobia</taxon>
        <taxon>Terriglobales</taxon>
        <taxon>Candidatus Korobacteraceae</taxon>
        <taxon>Candidatus Korobacter</taxon>
    </lineage>
</organism>